<sequence length="280" mass="31335">MNENMIECKNVVYKYEKAEEESKVAVDNVNLDIKKGEFLVVLGHNGSGKSTLSKHMNALLLPSEGTVYVSGMDTKDESNIWKIRNNAGMVFQNPDNQLVATIVEEDVAFGPENLGIAPDEIRSRVDEALKRVNMYEYRRYAPHLLSGGQKQRIAIAGILAMRPECIIFDEPTAMLDPSGRKEVVNTIKELNERYGITIILITHYMEEAVEADRIVVMDKGKIVMEGTPREIFSNVPLMKNIGLDVPQMTELAYELQNSGVNIASDILTIDEMVNALCQLK</sequence>
<accession>A0PXX7</accession>
<name>ECFA1_CLONN</name>
<evidence type="ECO:0000255" key="1">
    <source>
        <dbReference type="HAMAP-Rule" id="MF_01710"/>
    </source>
</evidence>
<reference key="1">
    <citation type="journal article" date="2006" name="Nat. Biotechnol.">
        <title>The genome and transcriptomes of the anti-tumor agent Clostridium novyi-NT.</title>
        <authorList>
            <person name="Bettegowda C."/>
            <person name="Huang X."/>
            <person name="Lin J."/>
            <person name="Cheong I."/>
            <person name="Kohli M."/>
            <person name="Szabo S.A."/>
            <person name="Zhang X."/>
            <person name="Diaz L.A. Jr."/>
            <person name="Velculescu V.E."/>
            <person name="Parmigiani G."/>
            <person name="Kinzler K.W."/>
            <person name="Vogelstein B."/>
            <person name="Zhou S."/>
        </authorList>
    </citation>
    <scope>NUCLEOTIDE SEQUENCE [LARGE SCALE GENOMIC DNA]</scope>
    <source>
        <strain>NT</strain>
    </source>
</reference>
<dbReference type="EC" id="7.-.-.-" evidence="1"/>
<dbReference type="EMBL" id="CP000382">
    <property type="protein sequence ID" value="ABK61051.1"/>
    <property type="molecule type" value="Genomic_DNA"/>
</dbReference>
<dbReference type="RefSeq" id="WP_011721237.1">
    <property type="nucleotide sequence ID" value="NC_008593.1"/>
</dbReference>
<dbReference type="SMR" id="A0PXX7"/>
<dbReference type="STRING" id="386415.NT01CX_1146"/>
<dbReference type="KEGG" id="cno:NT01CX_1146"/>
<dbReference type="PATRIC" id="fig|386415.7.peg.256"/>
<dbReference type="eggNOG" id="COG1122">
    <property type="taxonomic scope" value="Bacteria"/>
</dbReference>
<dbReference type="HOGENOM" id="CLU_000604_1_22_9"/>
<dbReference type="Proteomes" id="UP000008220">
    <property type="component" value="Chromosome"/>
</dbReference>
<dbReference type="GO" id="GO:0043190">
    <property type="term" value="C:ATP-binding cassette (ABC) transporter complex"/>
    <property type="evidence" value="ECO:0007669"/>
    <property type="project" value="TreeGrafter"/>
</dbReference>
<dbReference type="GO" id="GO:0005524">
    <property type="term" value="F:ATP binding"/>
    <property type="evidence" value="ECO:0007669"/>
    <property type="project" value="UniProtKB-KW"/>
</dbReference>
<dbReference type="GO" id="GO:0016887">
    <property type="term" value="F:ATP hydrolysis activity"/>
    <property type="evidence" value="ECO:0007669"/>
    <property type="project" value="InterPro"/>
</dbReference>
<dbReference type="GO" id="GO:0042626">
    <property type="term" value="F:ATPase-coupled transmembrane transporter activity"/>
    <property type="evidence" value="ECO:0007669"/>
    <property type="project" value="TreeGrafter"/>
</dbReference>
<dbReference type="CDD" id="cd03225">
    <property type="entry name" value="ABC_cobalt_CbiO_domain1"/>
    <property type="match status" value="1"/>
</dbReference>
<dbReference type="FunFam" id="3.40.50.300:FF:000224">
    <property type="entry name" value="Energy-coupling factor transporter ATP-binding protein EcfA"/>
    <property type="match status" value="1"/>
</dbReference>
<dbReference type="Gene3D" id="3.40.50.300">
    <property type="entry name" value="P-loop containing nucleotide triphosphate hydrolases"/>
    <property type="match status" value="1"/>
</dbReference>
<dbReference type="InterPro" id="IPR003593">
    <property type="entry name" value="AAA+_ATPase"/>
</dbReference>
<dbReference type="InterPro" id="IPR003439">
    <property type="entry name" value="ABC_transporter-like_ATP-bd"/>
</dbReference>
<dbReference type="InterPro" id="IPR017871">
    <property type="entry name" value="ABC_transporter-like_CS"/>
</dbReference>
<dbReference type="InterPro" id="IPR015856">
    <property type="entry name" value="ABC_transpr_CbiO/EcfA_su"/>
</dbReference>
<dbReference type="InterPro" id="IPR050095">
    <property type="entry name" value="ECF_ABC_transporter_ATP-bd"/>
</dbReference>
<dbReference type="InterPro" id="IPR030947">
    <property type="entry name" value="EcfA_1"/>
</dbReference>
<dbReference type="InterPro" id="IPR027417">
    <property type="entry name" value="P-loop_NTPase"/>
</dbReference>
<dbReference type="NCBIfam" id="TIGR04520">
    <property type="entry name" value="ECF_ATPase_1"/>
    <property type="match status" value="1"/>
</dbReference>
<dbReference type="NCBIfam" id="NF010167">
    <property type="entry name" value="PRK13648.1"/>
    <property type="match status" value="1"/>
</dbReference>
<dbReference type="PANTHER" id="PTHR43553:SF24">
    <property type="entry name" value="ENERGY-COUPLING FACTOR TRANSPORTER ATP-BINDING PROTEIN ECFA1"/>
    <property type="match status" value="1"/>
</dbReference>
<dbReference type="PANTHER" id="PTHR43553">
    <property type="entry name" value="HEAVY METAL TRANSPORTER"/>
    <property type="match status" value="1"/>
</dbReference>
<dbReference type="Pfam" id="PF00005">
    <property type="entry name" value="ABC_tran"/>
    <property type="match status" value="1"/>
</dbReference>
<dbReference type="SMART" id="SM00382">
    <property type="entry name" value="AAA"/>
    <property type="match status" value="1"/>
</dbReference>
<dbReference type="SUPFAM" id="SSF52540">
    <property type="entry name" value="P-loop containing nucleoside triphosphate hydrolases"/>
    <property type="match status" value="1"/>
</dbReference>
<dbReference type="PROSITE" id="PS00211">
    <property type="entry name" value="ABC_TRANSPORTER_1"/>
    <property type="match status" value="1"/>
</dbReference>
<dbReference type="PROSITE" id="PS50893">
    <property type="entry name" value="ABC_TRANSPORTER_2"/>
    <property type="match status" value="1"/>
</dbReference>
<dbReference type="PROSITE" id="PS51246">
    <property type="entry name" value="CBIO"/>
    <property type="match status" value="1"/>
</dbReference>
<comment type="function">
    <text evidence="1">ATP-binding (A) component of a common energy-coupling factor (ECF) ABC-transporter complex. Unlike classic ABC transporters this ECF transporter provides the energy necessary to transport a number of different substrates.</text>
</comment>
<comment type="subunit">
    <text evidence="1">Forms a stable energy-coupling factor (ECF) transporter complex composed of 2 membrane-embedded substrate-binding proteins (S component), 2 ATP-binding proteins (A component) and 2 transmembrane proteins (T component).</text>
</comment>
<comment type="subcellular location">
    <subcellularLocation>
        <location evidence="1">Cell membrane</location>
        <topology evidence="1">Peripheral membrane protein</topology>
    </subcellularLocation>
</comment>
<comment type="similarity">
    <text evidence="1">Belongs to the ABC transporter superfamily. Energy-coupling factor EcfA family.</text>
</comment>
<gene>
    <name evidence="1" type="primary">ecfA1</name>
    <name type="synonym">cbiO1</name>
    <name type="ordered locus">NT01CX_1146</name>
</gene>
<keyword id="KW-0067">ATP-binding</keyword>
<keyword id="KW-1003">Cell membrane</keyword>
<keyword id="KW-0472">Membrane</keyword>
<keyword id="KW-0547">Nucleotide-binding</keyword>
<keyword id="KW-1185">Reference proteome</keyword>
<keyword id="KW-1278">Translocase</keyword>
<keyword id="KW-0813">Transport</keyword>
<proteinExistence type="inferred from homology"/>
<feature type="chain" id="PRO_0000287930" description="Energy-coupling factor transporter ATP-binding protein EcfA1">
    <location>
        <begin position="1"/>
        <end position="280"/>
    </location>
</feature>
<feature type="domain" description="ABC transporter" evidence="1">
    <location>
        <begin position="6"/>
        <end position="244"/>
    </location>
</feature>
<feature type="binding site" evidence="1">
    <location>
        <begin position="43"/>
        <end position="50"/>
    </location>
    <ligand>
        <name>ATP</name>
        <dbReference type="ChEBI" id="CHEBI:30616"/>
    </ligand>
</feature>
<organism>
    <name type="scientific">Clostridium novyi (strain NT)</name>
    <dbReference type="NCBI Taxonomy" id="386415"/>
    <lineage>
        <taxon>Bacteria</taxon>
        <taxon>Bacillati</taxon>
        <taxon>Bacillota</taxon>
        <taxon>Clostridia</taxon>
        <taxon>Eubacteriales</taxon>
        <taxon>Clostridiaceae</taxon>
        <taxon>Clostridium</taxon>
    </lineage>
</organism>
<protein>
    <recommendedName>
        <fullName evidence="1">Energy-coupling factor transporter ATP-binding protein EcfA1</fullName>
        <shortName evidence="1">ECF transporter A component EcfA1</shortName>
        <ecNumber evidence="1">7.-.-.-</ecNumber>
    </recommendedName>
</protein>